<proteinExistence type="inferred from homology"/>
<accession>B5FLH9</accession>
<reference key="1">
    <citation type="journal article" date="2011" name="J. Bacteriol.">
        <title>Comparative genomics of 28 Salmonella enterica isolates: evidence for CRISPR-mediated adaptive sublineage evolution.</title>
        <authorList>
            <person name="Fricke W.F."/>
            <person name="Mammel M.K."/>
            <person name="McDermott P.F."/>
            <person name="Tartera C."/>
            <person name="White D.G."/>
            <person name="Leclerc J.E."/>
            <person name="Ravel J."/>
            <person name="Cebula T.A."/>
        </authorList>
    </citation>
    <scope>NUCLEOTIDE SEQUENCE [LARGE SCALE GENOMIC DNA]</scope>
    <source>
        <strain>CT_02021853</strain>
    </source>
</reference>
<name>SECB_SALDC</name>
<protein>
    <recommendedName>
        <fullName evidence="1">Protein-export protein SecB</fullName>
    </recommendedName>
</protein>
<keyword id="KW-0143">Chaperone</keyword>
<keyword id="KW-0963">Cytoplasm</keyword>
<keyword id="KW-0653">Protein transport</keyword>
<keyword id="KW-0811">Translocation</keyword>
<keyword id="KW-0813">Transport</keyword>
<feature type="chain" id="PRO_1000195340" description="Protein-export protein SecB">
    <location>
        <begin position="1"/>
        <end position="155"/>
    </location>
</feature>
<organism>
    <name type="scientific">Salmonella dublin (strain CT_02021853)</name>
    <dbReference type="NCBI Taxonomy" id="439851"/>
    <lineage>
        <taxon>Bacteria</taxon>
        <taxon>Pseudomonadati</taxon>
        <taxon>Pseudomonadota</taxon>
        <taxon>Gammaproteobacteria</taxon>
        <taxon>Enterobacterales</taxon>
        <taxon>Enterobacteriaceae</taxon>
        <taxon>Salmonella</taxon>
    </lineage>
</organism>
<sequence length="155" mass="17245">MSEQNNTEMAFQIQRIYTKDVSFEAPNAPHVFQKDWQPEVKLDLDTASSQLADDVYEVVLRVTVTASLGEETAFLCEVQQAGIFSISGIEGTQMAHCLGAYCPNILFPYARECITSLVSRGTFPQLNLAPVNFDALFMNYLQQQAGEGTEEHQDA</sequence>
<comment type="function">
    <text evidence="1">One of the proteins required for the normal export of preproteins out of the cell cytoplasm. It is a molecular chaperone that binds to a subset of precursor proteins, maintaining them in a translocation-competent state. It also specifically binds to its receptor SecA.</text>
</comment>
<comment type="subunit">
    <text evidence="1">Homotetramer, a dimer of dimers. One homotetramer interacts with 1 SecA dimer.</text>
</comment>
<comment type="subcellular location">
    <subcellularLocation>
        <location evidence="1">Cytoplasm</location>
    </subcellularLocation>
</comment>
<comment type="similarity">
    <text evidence="1">Belongs to the SecB family.</text>
</comment>
<evidence type="ECO:0000255" key="1">
    <source>
        <dbReference type="HAMAP-Rule" id="MF_00821"/>
    </source>
</evidence>
<dbReference type="EMBL" id="CP001144">
    <property type="protein sequence ID" value="ACH74156.1"/>
    <property type="molecule type" value="Genomic_DNA"/>
</dbReference>
<dbReference type="RefSeq" id="WP_000003370.1">
    <property type="nucleotide sequence ID" value="NC_011205.1"/>
</dbReference>
<dbReference type="SMR" id="B5FLH9"/>
<dbReference type="KEGG" id="sed:SeD_A4087"/>
<dbReference type="HOGENOM" id="CLU_111574_1_0_6"/>
<dbReference type="Proteomes" id="UP000008322">
    <property type="component" value="Chromosome"/>
</dbReference>
<dbReference type="GO" id="GO:0005737">
    <property type="term" value="C:cytoplasm"/>
    <property type="evidence" value="ECO:0007669"/>
    <property type="project" value="UniProtKB-SubCell"/>
</dbReference>
<dbReference type="GO" id="GO:0051082">
    <property type="term" value="F:unfolded protein binding"/>
    <property type="evidence" value="ECO:0007669"/>
    <property type="project" value="InterPro"/>
</dbReference>
<dbReference type="GO" id="GO:0006457">
    <property type="term" value="P:protein folding"/>
    <property type="evidence" value="ECO:0007669"/>
    <property type="project" value="UniProtKB-UniRule"/>
</dbReference>
<dbReference type="GO" id="GO:0051262">
    <property type="term" value="P:protein tetramerization"/>
    <property type="evidence" value="ECO:0007669"/>
    <property type="project" value="InterPro"/>
</dbReference>
<dbReference type="GO" id="GO:0015031">
    <property type="term" value="P:protein transport"/>
    <property type="evidence" value="ECO:0007669"/>
    <property type="project" value="UniProtKB-UniRule"/>
</dbReference>
<dbReference type="CDD" id="cd00557">
    <property type="entry name" value="Translocase_SecB"/>
    <property type="match status" value="1"/>
</dbReference>
<dbReference type="FunFam" id="3.10.420.10:FF:000001">
    <property type="entry name" value="Protein-export chaperone SecB"/>
    <property type="match status" value="1"/>
</dbReference>
<dbReference type="Gene3D" id="3.10.420.10">
    <property type="entry name" value="SecB-like"/>
    <property type="match status" value="1"/>
</dbReference>
<dbReference type="HAMAP" id="MF_00821">
    <property type="entry name" value="SecB"/>
    <property type="match status" value="1"/>
</dbReference>
<dbReference type="InterPro" id="IPR003708">
    <property type="entry name" value="SecB"/>
</dbReference>
<dbReference type="InterPro" id="IPR035958">
    <property type="entry name" value="SecB-like_sf"/>
</dbReference>
<dbReference type="NCBIfam" id="NF004390">
    <property type="entry name" value="PRK05751.1-1"/>
    <property type="match status" value="1"/>
</dbReference>
<dbReference type="NCBIfam" id="NF004393">
    <property type="entry name" value="PRK05751.1-4"/>
    <property type="match status" value="1"/>
</dbReference>
<dbReference type="NCBIfam" id="TIGR00809">
    <property type="entry name" value="secB"/>
    <property type="match status" value="1"/>
</dbReference>
<dbReference type="PANTHER" id="PTHR36918">
    <property type="match status" value="1"/>
</dbReference>
<dbReference type="PANTHER" id="PTHR36918:SF1">
    <property type="entry name" value="PROTEIN-EXPORT PROTEIN SECB"/>
    <property type="match status" value="1"/>
</dbReference>
<dbReference type="Pfam" id="PF02556">
    <property type="entry name" value="SecB"/>
    <property type="match status" value="1"/>
</dbReference>
<dbReference type="PRINTS" id="PR01594">
    <property type="entry name" value="SECBCHAPRONE"/>
</dbReference>
<dbReference type="SUPFAM" id="SSF54611">
    <property type="entry name" value="SecB-like"/>
    <property type="match status" value="1"/>
</dbReference>
<gene>
    <name evidence="1" type="primary">secB</name>
    <name type="ordered locus">SeD_A4087</name>
</gene>